<comment type="function">
    <text evidence="1">Heme chaperone required for the biogenesis of c-type cytochromes. Transiently binds heme delivered by CcmC and transfers the heme to apo-cytochromes in a process facilitated by CcmF and CcmH.</text>
</comment>
<comment type="subcellular location">
    <subcellularLocation>
        <location evidence="1">Cell inner membrane</location>
        <topology evidence="1">Single-pass type II membrane protein</topology>
        <orientation evidence="1">Periplasmic side</orientation>
    </subcellularLocation>
</comment>
<comment type="similarity">
    <text evidence="1">Belongs to the CcmE/CycJ family.</text>
</comment>
<proteinExistence type="inferred from homology"/>
<dbReference type="EMBL" id="CR925677">
    <property type="protein sequence ID" value="CAI27758.1"/>
    <property type="molecule type" value="Genomic_DNA"/>
</dbReference>
<dbReference type="RefSeq" id="WP_011255463.1">
    <property type="nucleotide sequence ID" value="NC_006831.1"/>
</dbReference>
<dbReference type="SMR" id="Q5FHG0"/>
<dbReference type="KEGG" id="erg:ERGA_CDS_03060"/>
<dbReference type="HOGENOM" id="CLU_079503_1_1_5"/>
<dbReference type="OrthoDB" id="9793584at2"/>
<dbReference type="Proteomes" id="UP000000533">
    <property type="component" value="Chromosome"/>
</dbReference>
<dbReference type="GO" id="GO:0005886">
    <property type="term" value="C:plasma membrane"/>
    <property type="evidence" value="ECO:0007669"/>
    <property type="project" value="UniProtKB-SubCell"/>
</dbReference>
<dbReference type="GO" id="GO:0020037">
    <property type="term" value="F:heme binding"/>
    <property type="evidence" value="ECO:0007669"/>
    <property type="project" value="InterPro"/>
</dbReference>
<dbReference type="GO" id="GO:0046872">
    <property type="term" value="F:metal ion binding"/>
    <property type="evidence" value="ECO:0007669"/>
    <property type="project" value="UniProtKB-KW"/>
</dbReference>
<dbReference type="GO" id="GO:0017004">
    <property type="term" value="P:cytochrome complex assembly"/>
    <property type="evidence" value="ECO:0007669"/>
    <property type="project" value="UniProtKB-KW"/>
</dbReference>
<dbReference type="Gene3D" id="2.40.50.140">
    <property type="entry name" value="Nucleic acid-binding proteins"/>
    <property type="match status" value="1"/>
</dbReference>
<dbReference type="HAMAP" id="MF_01959">
    <property type="entry name" value="CcmE"/>
    <property type="match status" value="1"/>
</dbReference>
<dbReference type="InterPro" id="IPR004329">
    <property type="entry name" value="CcmE"/>
</dbReference>
<dbReference type="InterPro" id="IPR036127">
    <property type="entry name" value="CcmE-like_sf"/>
</dbReference>
<dbReference type="InterPro" id="IPR012340">
    <property type="entry name" value="NA-bd_OB-fold"/>
</dbReference>
<dbReference type="NCBIfam" id="NF009727">
    <property type="entry name" value="PRK13254.1-1"/>
    <property type="match status" value="1"/>
</dbReference>
<dbReference type="PANTHER" id="PTHR34128">
    <property type="entry name" value="CYTOCHROME C-TYPE BIOGENESIS PROTEIN CCME HOMOLOG, MITOCHONDRIAL"/>
    <property type="match status" value="1"/>
</dbReference>
<dbReference type="PANTHER" id="PTHR34128:SF2">
    <property type="entry name" value="CYTOCHROME C-TYPE BIOGENESIS PROTEIN CCME HOMOLOG, MITOCHONDRIAL"/>
    <property type="match status" value="1"/>
</dbReference>
<dbReference type="Pfam" id="PF03100">
    <property type="entry name" value="CcmE"/>
    <property type="match status" value="1"/>
</dbReference>
<dbReference type="SUPFAM" id="SSF82093">
    <property type="entry name" value="Heme chaperone CcmE"/>
    <property type="match status" value="1"/>
</dbReference>
<keyword id="KW-0997">Cell inner membrane</keyword>
<keyword id="KW-1003">Cell membrane</keyword>
<keyword id="KW-0201">Cytochrome c-type biogenesis</keyword>
<keyword id="KW-0349">Heme</keyword>
<keyword id="KW-0408">Iron</keyword>
<keyword id="KW-0472">Membrane</keyword>
<keyword id="KW-0479">Metal-binding</keyword>
<keyword id="KW-0735">Signal-anchor</keyword>
<keyword id="KW-0812">Transmembrane</keyword>
<keyword id="KW-1133">Transmembrane helix</keyword>
<gene>
    <name evidence="1" type="primary">ccmE</name>
    <name evidence="1" type="synonym">cycJ</name>
    <name type="ordered locus">ERGA_CDS_03060</name>
</gene>
<evidence type="ECO:0000255" key="1">
    <source>
        <dbReference type="HAMAP-Rule" id="MF_01959"/>
    </source>
</evidence>
<organism>
    <name type="scientific">Ehrlichia ruminantium (strain Gardel)</name>
    <dbReference type="NCBI Taxonomy" id="302409"/>
    <lineage>
        <taxon>Bacteria</taxon>
        <taxon>Pseudomonadati</taxon>
        <taxon>Pseudomonadota</taxon>
        <taxon>Alphaproteobacteria</taxon>
        <taxon>Rickettsiales</taxon>
        <taxon>Anaplasmataceae</taxon>
        <taxon>Ehrlichia</taxon>
    </lineage>
</organism>
<accession>Q5FHG0</accession>
<name>CCME_EHRRG</name>
<reference key="1">
    <citation type="journal article" date="2006" name="J. Bacteriol.">
        <title>Comparative genomic analysis of three strains of Ehrlichia ruminantium reveals an active process of genome size plasticity.</title>
        <authorList>
            <person name="Frutos R."/>
            <person name="Viari A."/>
            <person name="Ferraz C."/>
            <person name="Morgat A."/>
            <person name="Eychenie S."/>
            <person name="Kandassamy Y."/>
            <person name="Chantal I."/>
            <person name="Bensaid A."/>
            <person name="Coissac E."/>
            <person name="Vachiery N."/>
            <person name="Demaille J."/>
            <person name="Martinez D."/>
        </authorList>
    </citation>
    <scope>NUCLEOTIDE SEQUENCE [LARGE SCALE GENOMIC DNA]</scope>
    <source>
        <strain>Gardel</strain>
    </source>
</reference>
<feature type="chain" id="PRO_0000238808" description="Cytochrome c-type biogenesis protein CcmE">
    <location>
        <begin position="1"/>
        <end position="134"/>
    </location>
</feature>
<feature type="topological domain" description="Cytoplasmic" evidence="1">
    <location>
        <begin position="1"/>
        <end position="7"/>
    </location>
</feature>
<feature type="transmembrane region" description="Helical; Signal-anchor for type II membrane protein" evidence="1">
    <location>
        <begin position="8"/>
        <end position="28"/>
    </location>
</feature>
<feature type="topological domain" description="Periplasmic" evidence="1">
    <location>
        <begin position="29"/>
        <end position="134"/>
    </location>
</feature>
<feature type="binding site" description="covalent" evidence="1">
    <location>
        <position position="120"/>
    </location>
    <ligand>
        <name>heme</name>
        <dbReference type="ChEBI" id="CHEBI:30413"/>
    </ligand>
</feature>
<feature type="binding site" description="axial binding residue" evidence="1">
    <location>
        <position position="124"/>
    </location>
    <ligand>
        <name>heme</name>
        <dbReference type="ChEBI" id="CHEBI:30413"/>
    </ligand>
    <ligandPart>
        <name>Fe</name>
        <dbReference type="ChEBI" id="CHEBI:18248"/>
    </ligandPart>
</feature>
<sequence>MKRKYRRLFVVIITLSIFAGSVVFVLGKLKNNVSFFYTPTELLSSSLINRPNIRIGGMVVKGTVQKYDDSIVFHITDLKNYIKVVYKGILPPLFSEGSWIVAKGKMVNGKFIASEILAKHDENYMPNKYKTNNL</sequence>
<protein>
    <recommendedName>
        <fullName evidence="1">Cytochrome c-type biogenesis protein CcmE</fullName>
    </recommendedName>
    <alternativeName>
        <fullName evidence="1">Cytochrome c maturation protein E</fullName>
    </alternativeName>
    <alternativeName>
        <fullName evidence="1">Heme chaperone CcmE</fullName>
    </alternativeName>
</protein>